<comment type="function">
    <text evidence="1">Protein S19 forms a complex with S13 that binds strongly to the 16S ribosomal RNA.</text>
</comment>
<comment type="similarity">
    <text evidence="1">Belongs to the universal ribosomal protein uS19 family.</text>
</comment>
<sequence>MPRSLKKGPFIDLHLLKKVEKAVESGDKKPLRTWSRRSTIFPNMIGLTIAVHNGRQHVPVFVSDEMVGHKLGEFAPTRTYRGHAADKKAKKK</sequence>
<keyword id="KW-0687">Ribonucleoprotein</keyword>
<keyword id="KW-0689">Ribosomal protein</keyword>
<keyword id="KW-0694">RNA-binding</keyword>
<keyword id="KW-0699">rRNA-binding</keyword>
<reference key="1">
    <citation type="journal article" date="2005" name="Nucleic Acids Res.">
        <title>The genome sequence of Salmonella enterica serovar Choleraesuis, a highly invasive and resistant zoonotic pathogen.</title>
        <authorList>
            <person name="Chiu C.-H."/>
            <person name="Tang P."/>
            <person name="Chu C."/>
            <person name="Hu S."/>
            <person name="Bao Q."/>
            <person name="Yu J."/>
            <person name="Chou Y.-Y."/>
            <person name="Wang H.-S."/>
            <person name="Lee Y.-S."/>
        </authorList>
    </citation>
    <scope>NUCLEOTIDE SEQUENCE [LARGE SCALE GENOMIC DNA]</scope>
    <source>
        <strain>SC-B67</strain>
    </source>
</reference>
<name>RS19_SALCH</name>
<evidence type="ECO:0000255" key="1">
    <source>
        <dbReference type="HAMAP-Rule" id="MF_00531"/>
    </source>
</evidence>
<evidence type="ECO:0000305" key="2"/>
<accession>Q57J36</accession>
<protein>
    <recommendedName>
        <fullName evidence="1">Small ribosomal subunit protein uS19</fullName>
    </recommendedName>
    <alternativeName>
        <fullName evidence="2">30S ribosomal protein S19</fullName>
    </alternativeName>
</protein>
<dbReference type="EMBL" id="AE017220">
    <property type="protein sequence ID" value="AAX67276.1"/>
    <property type="molecule type" value="Genomic_DNA"/>
</dbReference>
<dbReference type="RefSeq" id="WP_001138115.1">
    <property type="nucleotide sequence ID" value="NC_006905.1"/>
</dbReference>
<dbReference type="SMR" id="Q57J36"/>
<dbReference type="GeneID" id="97603665"/>
<dbReference type="KEGG" id="sec:SCH_3370"/>
<dbReference type="HOGENOM" id="CLU_144911_0_1_6"/>
<dbReference type="Proteomes" id="UP000000538">
    <property type="component" value="Chromosome"/>
</dbReference>
<dbReference type="GO" id="GO:0005737">
    <property type="term" value="C:cytoplasm"/>
    <property type="evidence" value="ECO:0007669"/>
    <property type="project" value="UniProtKB-ARBA"/>
</dbReference>
<dbReference type="GO" id="GO:0015935">
    <property type="term" value="C:small ribosomal subunit"/>
    <property type="evidence" value="ECO:0007669"/>
    <property type="project" value="InterPro"/>
</dbReference>
<dbReference type="GO" id="GO:0019843">
    <property type="term" value="F:rRNA binding"/>
    <property type="evidence" value="ECO:0007669"/>
    <property type="project" value="UniProtKB-UniRule"/>
</dbReference>
<dbReference type="GO" id="GO:0003735">
    <property type="term" value="F:structural constituent of ribosome"/>
    <property type="evidence" value="ECO:0007669"/>
    <property type="project" value="InterPro"/>
</dbReference>
<dbReference type="GO" id="GO:0000028">
    <property type="term" value="P:ribosomal small subunit assembly"/>
    <property type="evidence" value="ECO:0007669"/>
    <property type="project" value="TreeGrafter"/>
</dbReference>
<dbReference type="GO" id="GO:0006412">
    <property type="term" value="P:translation"/>
    <property type="evidence" value="ECO:0007669"/>
    <property type="project" value="UniProtKB-UniRule"/>
</dbReference>
<dbReference type="FunFam" id="3.30.860.10:FF:000001">
    <property type="entry name" value="30S ribosomal protein S19"/>
    <property type="match status" value="1"/>
</dbReference>
<dbReference type="Gene3D" id="3.30.860.10">
    <property type="entry name" value="30s Ribosomal Protein S19, Chain A"/>
    <property type="match status" value="1"/>
</dbReference>
<dbReference type="HAMAP" id="MF_00531">
    <property type="entry name" value="Ribosomal_uS19"/>
    <property type="match status" value="1"/>
</dbReference>
<dbReference type="InterPro" id="IPR002222">
    <property type="entry name" value="Ribosomal_uS19"/>
</dbReference>
<dbReference type="InterPro" id="IPR005732">
    <property type="entry name" value="Ribosomal_uS19_bac-type"/>
</dbReference>
<dbReference type="InterPro" id="IPR020934">
    <property type="entry name" value="Ribosomal_uS19_CS"/>
</dbReference>
<dbReference type="InterPro" id="IPR023575">
    <property type="entry name" value="Ribosomal_uS19_SF"/>
</dbReference>
<dbReference type="NCBIfam" id="TIGR01050">
    <property type="entry name" value="rpsS_bact"/>
    <property type="match status" value="1"/>
</dbReference>
<dbReference type="PANTHER" id="PTHR11880">
    <property type="entry name" value="RIBOSOMAL PROTEIN S19P FAMILY MEMBER"/>
    <property type="match status" value="1"/>
</dbReference>
<dbReference type="PANTHER" id="PTHR11880:SF8">
    <property type="entry name" value="SMALL RIBOSOMAL SUBUNIT PROTEIN US19M"/>
    <property type="match status" value="1"/>
</dbReference>
<dbReference type="Pfam" id="PF00203">
    <property type="entry name" value="Ribosomal_S19"/>
    <property type="match status" value="1"/>
</dbReference>
<dbReference type="PIRSF" id="PIRSF002144">
    <property type="entry name" value="Ribosomal_S19"/>
    <property type="match status" value="1"/>
</dbReference>
<dbReference type="PRINTS" id="PR00975">
    <property type="entry name" value="RIBOSOMALS19"/>
</dbReference>
<dbReference type="SUPFAM" id="SSF54570">
    <property type="entry name" value="Ribosomal protein S19"/>
    <property type="match status" value="1"/>
</dbReference>
<dbReference type="PROSITE" id="PS00323">
    <property type="entry name" value="RIBOSOMAL_S19"/>
    <property type="match status" value="1"/>
</dbReference>
<feature type="chain" id="PRO_0000265425" description="Small ribosomal subunit protein uS19">
    <location>
        <begin position="1"/>
        <end position="92"/>
    </location>
</feature>
<proteinExistence type="inferred from homology"/>
<organism>
    <name type="scientific">Salmonella choleraesuis (strain SC-B67)</name>
    <dbReference type="NCBI Taxonomy" id="321314"/>
    <lineage>
        <taxon>Bacteria</taxon>
        <taxon>Pseudomonadati</taxon>
        <taxon>Pseudomonadota</taxon>
        <taxon>Gammaproteobacteria</taxon>
        <taxon>Enterobacterales</taxon>
        <taxon>Enterobacteriaceae</taxon>
        <taxon>Salmonella</taxon>
    </lineage>
</organism>
<gene>
    <name evidence="1" type="primary">rpsS</name>
    <name type="ordered locus">SCH_3370</name>
</gene>